<comment type="function">
    <text evidence="1">Catalyzes the reduction of the glycolytic intermediate dihydroxyacetone phosphate (DHAP) to sn-glycerol 3-phosphate (G3P), the key precursor for phospholipid synthesis.</text>
</comment>
<comment type="catalytic activity">
    <reaction evidence="1">
        <text>sn-glycerol 3-phosphate + NAD(+) = dihydroxyacetone phosphate + NADH + H(+)</text>
        <dbReference type="Rhea" id="RHEA:11092"/>
        <dbReference type="ChEBI" id="CHEBI:15378"/>
        <dbReference type="ChEBI" id="CHEBI:57540"/>
        <dbReference type="ChEBI" id="CHEBI:57597"/>
        <dbReference type="ChEBI" id="CHEBI:57642"/>
        <dbReference type="ChEBI" id="CHEBI:57945"/>
        <dbReference type="EC" id="1.1.1.94"/>
    </reaction>
    <physiologicalReaction direction="right-to-left" evidence="1">
        <dbReference type="Rhea" id="RHEA:11094"/>
    </physiologicalReaction>
</comment>
<comment type="catalytic activity">
    <reaction evidence="1">
        <text>sn-glycerol 3-phosphate + NADP(+) = dihydroxyacetone phosphate + NADPH + H(+)</text>
        <dbReference type="Rhea" id="RHEA:11096"/>
        <dbReference type="ChEBI" id="CHEBI:15378"/>
        <dbReference type="ChEBI" id="CHEBI:57597"/>
        <dbReference type="ChEBI" id="CHEBI:57642"/>
        <dbReference type="ChEBI" id="CHEBI:57783"/>
        <dbReference type="ChEBI" id="CHEBI:58349"/>
        <dbReference type="EC" id="1.1.1.94"/>
    </reaction>
    <physiologicalReaction direction="right-to-left" evidence="1">
        <dbReference type="Rhea" id="RHEA:11098"/>
    </physiologicalReaction>
</comment>
<comment type="pathway">
    <text evidence="1">Membrane lipid metabolism; glycerophospholipid metabolism.</text>
</comment>
<comment type="subcellular location">
    <subcellularLocation>
        <location evidence="1">Cytoplasm</location>
    </subcellularLocation>
</comment>
<comment type="similarity">
    <text evidence="1">Belongs to the NAD-dependent glycerol-3-phosphate dehydrogenase family.</text>
</comment>
<keyword id="KW-0963">Cytoplasm</keyword>
<keyword id="KW-0444">Lipid biosynthesis</keyword>
<keyword id="KW-0443">Lipid metabolism</keyword>
<keyword id="KW-0520">NAD</keyword>
<keyword id="KW-0521">NADP</keyword>
<keyword id="KW-0547">Nucleotide-binding</keyword>
<keyword id="KW-0560">Oxidoreductase</keyword>
<keyword id="KW-0594">Phospholipid biosynthesis</keyword>
<keyword id="KW-1208">Phospholipid metabolism</keyword>
<keyword id="KW-1185">Reference proteome</keyword>
<gene>
    <name evidence="1" type="primary">gpsA</name>
    <name type="ordered locus">ECA0173</name>
</gene>
<organism>
    <name type="scientific">Pectobacterium atrosepticum (strain SCRI 1043 / ATCC BAA-672)</name>
    <name type="common">Erwinia carotovora subsp. atroseptica</name>
    <dbReference type="NCBI Taxonomy" id="218491"/>
    <lineage>
        <taxon>Bacteria</taxon>
        <taxon>Pseudomonadati</taxon>
        <taxon>Pseudomonadota</taxon>
        <taxon>Gammaproteobacteria</taxon>
        <taxon>Enterobacterales</taxon>
        <taxon>Pectobacteriaceae</taxon>
        <taxon>Pectobacterium</taxon>
    </lineage>
</organism>
<feature type="chain" id="PRO_0000137962" description="Glycerol-3-phosphate dehydrogenase [NAD(P)+]">
    <location>
        <begin position="1"/>
        <end position="339"/>
    </location>
</feature>
<feature type="active site" description="Proton acceptor" evidence="1">
    <location>
        <position position="195"/>
    </location>
</feature>
<feature type="binding site" evidence="1">
    <location>
        <position position="15"/>
    </location>
    <ligand>
        <name>NADPH</name>
        <dbReference type="ChEBI" id="CHEBI:57783"/>
    </ligand>
</feature>
<feature type="binding site" evidence="1">
    <location>
        <position position="16"/>
    </location>
    <ligand>
        <name>NADPH</name>
        <dbReference type="ChEBI" id="CHEBI:57783"/>
    </ligand>
</feature>
<feature type="binding site" evidence="1">
    <location>
        <position position="36"/>
    </location>
    <ligand>
        <name>NADPH</name>
        <dbReference type="ChEBI" id="CHEBI:57783"/>
    </ligand>
</feature>
<feature type="binding site" evidence="1">
    <location>
        <position position="110"/>
    </location>
    <ligand>
        <name>NADPH</name>
        <dbReference type="ChEBI" id="CHEBI:57783"/>
    </ligand>
</feature>
<feature type="binding site" evidence="1">
    <location>
        <position position="110"/>
    </location>
    <ligand>
        <name>sn-glycerol 3-phosphate</name>
        <dbReference type="ChEBI" id="CHEBI:57597"/>
    </ligand>
</feature>
<feature type="binding site" evidence="1">
    <location>
        <position position="139"/>
    </location>
    <ligand>
        <name>sn-glycerol 3-phosphate</name>
        <dbReference type="ChEBI" id="CHEBI:57597"/>
    </ligand>
</feature>
<feature type="binding site" evidence="1">
    <location>
        <position position="141"/>
    </location>
    <ligand>
        <name>sn-glycerol 3-phosphate</name>
        <dbReference type="ChEBI" id="CHEBI:57597"/>
    </ligand>
</feature>
<feature type="binding site" evidence="1">
    <location>
        <position position="143"/>
    </location>
    <ligand>
        <name>NADPH</name>
        <dbReference type="ChEBI" id="CHEBI:57783"/>
    </ligand>
</feature>
<feature type="binding site" evidence="1">
    <location>
        <position position="195"/>
    </location>
    <ligand>
        <name>sn-glycerol 3-phosphate</name>
        <dbReference type="ChEBI" id="CHEBI:57597"/>
    </ligand>
</feature>
<feature type="binding site" evidence="1">
    <location>
        <position position="248"/>
    </location>
    <ligand>
        <name>sn-glycerol 3-phosphate</name>
        <dbReference type="ChEBI" id="CHEBI:57597"/>
    </ligand>
</feature>
<feature type="binding site" evidence="1">
    <location>
        <position position="258"/>
    </location>
    <ligand>
        <name>sn-glycerol 3-phosphate</name>
        <dbReference type="ChEBI" id="CHEBI:57597"/>
    </ligand>
</feature>
<feature type="binding site" evidence="1">
    <location>
        <position position="259"/>
    </location>
    <ligand>
        <name>NADPH</name>
        <dbReference type="ChEBI" id="CHEBI:57783"/>
    </ligand>
</feature>
<feature type="binding site" evidence="1">
    <location>
        <position position="259"/>
    </location>
    <ligand>
        <name>sn-glycerol 3-phosphate</name>
        <dbReference type="ChEBI" id="CHEBI:57597"/>
    </ligand>
</feature>
<feature type="binding site" evidence="1">
    <location>
        <position position="260"/>
    </location>
    <ligand>
        <name>sn-glycerol 3-phosphate</name>
        <dbReference type="ChEBI" id="CHEBI:57597"/>
    </ligand>
</feature>
<feature type="binding site" evidence="1">
    <location>
        <position position="283"/>
    </location>
    <ligand>
        <name>NADPH</name>
        <dbReference type="ChEBI" id="CHEBI:57783"/>
    </ligand>
</feature>
<feature type="binding site" evidence="1">
    <location>
        <position position="285"/>
    </location>
    <ligand>
        <name>NADPH</name>
        <dbReference type="ChEBI" id="CHEBI:57783"/>
    </ligand>
</feature>
<name>GPDA_PECAS</name>
<evidence type="ECO:0000255" key="1">
    <source>
        <dbReference type="HAMAP-Rule" id="MF_00394"/>
    </source>
</evidence>
<reference key="1">
    <citation type="journal article" date="2004" name="Proc. Natl. Acad. Sci. U.S.A.">
        <title>Genome sequence of the enterobacterial phytopathogen Erwinia carotovora subsp. atroseptica and characterization of virulence factors.</title>
        <authorList>
            <person name="Bell K.S."/>
            <person name="Sebaihia M."/>
            <person name="Pritchard L."/>
            <person name="Holden M.T.G."/>
            <person name="Hyman L.J."/>
            <person name="Holeva M.C."/>
            <person name="Thomson N.R."/>
            <person name="Bentley S.D."/>
            <person name="Churcher L.J.C."/>
            <person name="Mungall K."/>
            <person name="Atkin R."/>
            <person name="Bason N."/>
            <person name="Brooks K."/>
            <person name="Chillingworth T."/>
            <person name="Clark K."/>
            <person name="Doggett J."/>
            <person name="Fraser A."/>
            <person name="Hance Z."/>
            <person name="Hauser H."/>
            <person name="Jagels K."/>
            <person name="Moule S."/>
            <person name="Norbertczak H."/>
            <person name="Ormond D."/>
            <person name="Price C."/>
            <person name="Quail M.A."/>
            <person name="Sanders M."/>
            <person name="Walker D."/>
            <person name="Whitehead S."/>
            <person name="Salmond G.P.C."/>
            <person name="Birch P.R.J."/>
            <person name="Parkhill J."/>
            <person name="Toth I.K."/>
        </authorList>
    </citation>
    <scope>NUCLEOTIDE SEQUENCE [LARGE SCALE GENOMIC DNA]</scope>
    <source>
        <strain>SCRI 1043 / ATCC BAA-672</strain>
    </source>
</reference>
<sequence length="339" mass="36004">MNASDASMTVIGAGSYGTALAITLARNGHRVVLWGHNPTHIQALQAARCNQAFLPDVPFPDSLQLETNLAHALAASRNVLVVVPSHVFGDVLRQLKPHLRADARIVWATKGLEAETGRLLQDVAREALGETIPLAVVSGPTFAKELAAGMPTAIALASPDSEFADDLQQLLHCGKSFRVYSNPDFIGVQLGGAVKNVIAIGAGMSDGIGFGANARTALITRGLAEMTRLGAALGADPTTFMGMAGLGDLVLTCTDNQSRNRRFGMMLGQGMDVQSAQDSIGQVVEGYRNTKEVLALAQRYGVEMPITEQLWQVLYCGKDAREAALSLLGRTRKDETAKL</sequence>
<dbReference type="EC" id="1.1.1.94" evidence="1"/>
<dbReference type="EMBL" id="BX950851">
    <property type="protein sequence ID" value="CAG73092.1"/>
    <property type="molecule type" value="Genomic_DNA"/>
</dbReference>
<dbReference type="RefSeq" id="WP_011091812.1">
    <property type="nucleotide sequence ID" value="NC_004547.2"/>
</dbReference>
<dbReference type="SMR" id="Q6DAT0"/>
<dbReference type="STRING" id="218491.ECA0173"/>
<dbReference type="KEGG" id="eca:ECA0173"/>
<dbReference type="PATRIC" id="fig|218491.5.peg.173"/>
<dbReference type="eggNOG" id="COG0240">
    <property type="taxonomic scope" value="Bacteria"/>
</dbReference>
<dbReference type="HOGENOM" id="CLU_033449_0_2_6"/>
<dbReference type="OrthoDB" id="9812273at2"/>
<dbReference type="UniPathway" id="UPA00940"/>
<dbReference type="Proteomes" id="UP000007966">
    <property type="component" value="Chromosome"/>
</dbReference>
<dbReference type="GO" id="GO:0005829">
    <property type="term" value="C:cytosol"/>
    <property type="evidence" value="ECO:0007669"/>
    <property type="project" value="TreeGrafter"/>
</dbReference>
<dbReference type="GO" id="GO:0047952">
    <property type="term" value="F:glycerol-3-phosphate dehydrogenase [NAD(P)+] activity"/>
    <property type="evidence" value="ECO:0007669"/>
    <property type="project" value="UniProtKB-UniRule"/>
</dbReference>
<dbReference type="GO" id="GO:0051287">
    <property type="term" value="F:NAD binding"/>
    <property type="evidence" value="ECO:0007669"/>
    <property type="project" value="InterPro"/>
</dbReference>
<dbReference type="GO" id="GO:0005975">
    <property type="term" value="P:carbohydrate metabolic process"/>
    <property type="evidence" value="ECO:0007669"/>
    <property type="project" value="InterPro"/>
</dbReference>
<dbReference type="GO" id="GO:0046167">
    <property type="term" value="P:glycerol-3-phosphate biosynthetic process"/>
    <property type="evidence" value="ECO:0007669"/>
    <property type="project" value="UniProtKB-UniRule"/>
</dbReference>
<dbReference type="GO" id="GO:0046168">
    <property type="term" value="P:glycerol-3-phosphate catabolic process"/>
    <property type="evidence" value="ECO:0007669"/>
    <property type="project" value="InterPro"/>
</dbReference>
<dbReference type="GO" id="GO:0046474">
    <property type="term" value="P:glycerophospholipid biosynthetic process"/>
    <property type="evidence" value="ECO:0007669"/>
    <property type="project" value="TreeGrafter"/>
</dbReference>
<dbReference type="FunFam" id="1.10.1040.10:FF:000001">
    <property type="entry name" value="Glycerol-3-phosphate dehydrogenase [NAD(P)+]"/>
    <property type="match status" value="1"/>
</dbReference>
<dbReference type="FunFam" id="3.40.50.720:FF:000019">
    <property type="entry name" value="Glycerol-3-phosphate dehydrogenase [NAD(P)+]"/>
    <property type="match status" value="1"/>
</dbReference>
<dbReference type="Gene3D" id="1.10.1040.10">
    <property type="entry name" value="N-(1-d-carboxylethyl)-l-norvaline Dehydrogenase, domain 2"/>
    <property type="match status" value="1"/>
</dbReference>
<dbReference type="Gene3D" id="3.40.50.720">
    <property type="entry name" value="NAD(P)-binding Rossmann-like Domain"/>
    <property type="match status" value="1"/>
</dbReference>
<dbReference type="HAMAP" id="MF_00394">
    <property type="entry name" value="NAD_Glyc3P_dehydrog"/>
    <property type="match status" value="1"/>
</dbReference>
<dbReference type="InterPro" id="IPR008927">
    <property type="entry name" value="6-PGluconate_DH-like_C_sf"/>
</dbReference>
<dbReference type="InterPro" id="IPR013328">
    <property type="entry name" value="6PGD_dom2"/>
</dbReference>
<dbReference type="InterPro" id="IPR006168">
    <property type="entry name" value="G3P_DH_NAD-dep"/>
</dbReference>
<dbReference type="InterPro" id="IPR006109">
    <property type="entry name" value="G3P_DH_NAD-dep_C"/>
</dbReference>
<dbReference type="InterPro" id="IPR011128">
    <property type="entry name" value="G3P_DH_NAD-dep_N"/>
</dbReference>
<dbReference type="InterPro" id="IPR036291">
    <property type="entry name" value="NAD(P)-bd_dom_sf"/>
</dbReference>
<dbReference type="NCBIfam" id="NF000939">
    <property type="entry name" value="PRK00094.1-1"/>
    <property type="match status" value="1"/>
</dbReference>
<dbReference type="NCBIfam" id="NF000940">
    <property type="entry name" value="PRK00094.1-2"/>
    <property type="match status" value="1"/>
</dbReference>
<dbReference type="NCBIfam" id="NF000942">
    <property type="entry name" value="PRK00094.1-4"/>
    <property type="match status" value="1"/>
</dbReference>
<dbReference type="PANTHER" id="PTHR11728">
    <property type="entry name" value="GLYCEROL-3-PHOSPHATE DEHYDROGENASE"/>
    <property type="match status" value="1"/>
</dbReference>
<dbReference type="PANTHER" id="PTHR11728:SF1">
    <property type="entry name" value="GLYCEROL-3-PHOSPHATE DEHYDROGENASE [NAD(+)] 2, CHLOROPLASTIC"/>
    <property type="match status" value="1"/>
</dbReference>
<dbReference type="Pfam" id="PF07479">
    <property type="entry name" value="NAD_Gly3P_dh_C"/>
    <property type="match status" value="1"/>
</dbReference>
<dbReference type="Pfam" id="PF01210">
    <property type="entry name" value="NAD_Gly3P_dh_N"/>
    <property type="match status" value="1"/>
</dbReference>
<dbReference type="PIRSF" id="PIRSF000114">
    <property type="entry name" value="Glycerol-3-P_dh"/>
    <property type="match status" value="1"/>
</dbReference>
<dbReference type="PRINTS" id="PR00077">
    <property type="entry name" value="GPDHDRGNASE"/>
</dbReference>
<dbReference type="SUPFAM" id="SSF48179">
    <property type="entry name" value="6-phosphogluconate dehydrogenase C-terminal domain-like"/>
    <property type="match status" value="1"/>
</dbReference>
<dbReference type="SUPFAM" id="SSF51735">
    <property type="entry name" value="NAD(P)-binding Rossmann-fold domains"/>
    <property type="match status" value="1"/>
</dbReference>
<dbReference type="PROSITE" id="PS00957">
    <property type="entry name" value="NAD_G3PDH"/>
    <property type="match status" value="1"/>
</dbReference>
<proteinExistence type="inferred from homology"/>
<accession>Q6DAT0</accession>
<protein>
    <recommendedName>
        <fullName evidence="1">Glycerol-3-phosphate dehydrogenase [NAD(P)+]</fullName>
        <ecNumber evidence="1">1.1.1.94</ecNumber>
    </recommendedName>
    <alternativeName>
        <fullName evidence="1">NAD(P)(+)-dependent glycerol-3-phosphate dehydrogenase</fullName>
    </alternativeName>
    <alternativeName>
        <fullName evidence="1">NAD(P)H-dependent dihydroxyacetone-phosphate reductase</fullName>
    </alternativeName>
</protein>